<proteinExistence type="evidence at protein level"/>
<organism>
    <name type="scientific">Human immunodeficiency virus type 1 group M subtype B (isolate MN)</name>
    <name type="common">HIV-1</name>
    <dbReference type="NCBI Taxonomy" id="11696"/>
    <lineage>
        <taxon>Viruses</taxon>
        <taxon>Riboviria</taxon>
        <taxon>Pararnavirae</taxon>
        <taxon>Artverviricota</taxon>
        <taxon>Revtraviricetes</taxon>
        <taxon>Ortervirales</taxon>
        <taxon>Retroviridae</taxon>
        <taxon>Orthoretrovirinae</taxon>
        <taxon>Lentivirus</taxon>
        <taxon>Human immunodeficiency virus type 1</taxon>
    </lineage>
</organism>
<feature type="initiator methionine" description="Removed; by host" evidence="10">
    <location>
        <position position="1"/>
    </location>
</feature>
<feature type="chain" id="PRO_0000261221" description="Gag polyprotein">
    <location>
        <begin position="2"/>
        <end position="507"/>
    </location>
</feature>
<feature type="chain" id="PRO_0000038547" description="Matrix protein p17">
    <location>
        <begin position="2"/>
        <end position="135"/>
    </location>
</feature>
<feature type="chain" id="PRO_0000038548" description="Capsid protein p24">
    <location>
        <begin position="136"/>
        <end position="366"/>
    </location>
</feature>
<feature type="peptide" id="PRO_0000038549" description="Spacer peptide 1">
    <location>
        <begin position="367"/>
        <end position="380"/>
    </location>
</feature>
<feature type="chain" id="PRO_0000038550" description="Nucleocapsid protein p7">
    <location>
        <begin position="381"/>
        <end position="435"/>
    </location>
</feature>
<feature type="peptide" id="PRO_0000038551" description="Spacer peptide 2">
    <location>
        <begin position="436"/>
        <end position="451"/>
    </location>
</feature>
<feature type="chain" id="PRO_0000038552" description="p6-gag">
    <location>
        <begin position="452"/>
        <end position="507"/>
    </location>
</feature>
<feature type="zinc finger region" description="CCHC-type 1" evidence="8">
    <location>
        <begin position="393"/>
        <end position="410"/>
    </location>
</feature>
<feature type="zinc finger region" description="CCHC-type 2" evidence="8">
    <location>
        <begin position="414"/>
        <end position="431"/>
    </location>
</feature>
<feature type="region of interest" description="Interaction with Gp41" evidence="6">
    <location>
        <begin position="7"/>
        <end position="31"/>
    </location>
</feature>
<feature type="region of interest" description="Interaction with host CALM1" evidence="5">
    <location>
        <begin position="8"/>
        <end position="43"/>
    </location>
</feature>
<feature type="region of interest" description="Interaction with host AP3D1" evidence="7">
    <location>
        <begin position="12"/>
        <end position="19"/>
    </location>
</feature>
<feature type="region of interest" description="Interaction with membrane phosphatidylinositol 4,5-bisphosphate and RNA" evidence="6">
    <location>
        <begin position="14"/>
        <end position="33"/>
    </location>
</feature>
<feature type="region of interest" description="Interaction with membrane phosphatidylinositol 4,5-bisphosphate" evidence="6">
    <location>
        <begin position="73"/>
        <end position="77"/>
    </location>
</feature>
<feature type="region of interest" description="Disordered" evidence="9">
    <location>
        <begin position="106"/>
        <end position="131"/>
    </location>
</feature>
<feature type="region of interest" description="Interaction with host PPIA/CYPA and NUP153" evidence="6">
    <location>
        <begin position="192"/>
        <end position="230"/>
    </location>
</feature>
<feature type="region of interest" description="PPIA/CYPA-binding loop" evidence="5">
    <location>
        <begin position="220"/>
        <end position="228"/>
    </location>
</feature>
<feature type="region of interest" description="Dimerization/Multimerization of capsid protein p24" evidence="5">
    <location>
        <begin position="280"/>
        <end position="366"/>
    </location>
</feature>
<feature type="region of interest" description="Disordered" evidence="9">
    <location>
        <begin position="445"/>
        <end position="487"/>
    </location>
</feature>
<feature type="short sequence motif" description="Nuclear export signal" evidence="1">
    <location>
        <begin position="16"/>
        <end position="22"/>
    </location>
</feature>
<feature type="short sequence motif" description="Nuclear localization signal" evidence="1">
    <location>
        <begin position="26"/>
        <end position="32"/>
    </location>
</feature>
<feature type="short sequence motif" description="PTAP/PSAP motif">
    <location>
        <begin position="458"/>
        <end position="461"/>
    </location>
</feature>
<feature type="short sequence motif" description="LYPX(n)L motif">
    <location>
        <begin position="490"/>
        <end position="499"/>
    </location>
</feature>
<feature type="compositionally biased region" description="Basic and acidic residues" evidence="9">
    <location>
        <begin position="478"/>
        <end position="487"/>
    </location>
</feature>
<feature type="site" description="Cleavage; by viral protease" evidence="1">
    <location>
        <begin position="135"/>
        <end position="136"/>
    </location>
</feature>
<feature type="site" description="Cleavage; by viral protease" evidence="1">
    <location>
        <begin position="366"/>
        <end position="367"/>
    </location>
</feature>
<feature type="site" description="Cleavage; by viral protease" evidence="1">
    <location>
        <begin position="380"/>
        <end position="381"/>
    </location>
</feature>
<feature type="site" description="Cleavage; by viral protease" evidence="1">
    <location>
        <begin position="435"/>
        <end position="436"/>
    </location>
</feature>
<feature type="site" description="Cleavage; by viral protease" evidence="1">
    <location>
        <begin position="451"/>
        <end position="452"/>
    </location>
</feature>
<feature type="modified residue" description="Phosphoserine; by host MAPK1" evidence="6">
    <location>
        <position position="151"/>
    </location>
</feature>
<feature type="modified residue" description="Asymmetric dimethylarginine; in Nucleocapsid protein p7; by host PRMT6" evidence="1">
    <location>
        <position position="390"/>
    </location>
</feature>
<feature type="modified residue" description="Asymmetric dimethylarginine; in Nucleocapsid protein p7; by host PRMT6" evidence="1">
    <location>
        <position position="412"/>
    </location>
</feature>
<feature type="lipid moiety-binding region" description="N-myristoyl glycine; by host" evidence="10">
    <location>
        <position position="2"/>
    </location>
</feature>
<feature type="sequence variant">
    <original>V</original>
    <variation>I</variation>
    <location>
        <position position="35"/>
    </location>
</feature>
<feature type="sequence variant">
    <original>I</original>
    <variation>V</variation>
    <location>
        <position position="46"/>
    </location>
</feature>
<feature type="sequence variant">
    <original>R</original>
    <variation>L</variation>
    <location>
        <position position="75"/>
    </location>
</feature>
<feature type="sequence variant">
    <original>R</original>
    <variation>N</variation>
    <location>
        <position position="75"/>
    </location>
</feature>
<feature type="sequence variant">
    <original>R</original>
    <variation>S</variation>
    <location>
        <position position="75"/>
    </location>
</feature>
<feature type="sequence variant">
    <original>K</original>
    <variation>E</variation>
    <location>
        <position position="93"/>
    </location>
</feature>
<feature type="sequence conflict" description="In Ref. 1; AAA44853." evidence="11" ref="1">
    <original>K</original>
    <variation>N</variation>
    <location>
        <position position="18"/>
    </location>
</feature>
<feature type="sequence conflict" description="In Ref. 1; AAA44853." evidence="11" ref="1">
    <original>Q</original>
    <variation>E</variation>
    <location>
        <position position="142"/>
    </location>
</feature>
<feature type="sequence conflict" description="In Ref. 1; AAA44853." evidence="11" ref="1">
    <original>A</original>
    <variation>V</variation>
    <location>
        <position position="221"/>
    </location>
</feature>
<feature type="sequence conflict" description="In Ref. 1; AAA44853." evidence="11" ref="1">
    <original>A</original>
    <variation>T</variation>
    <location>
        <position position="227"/>
    </location>
</feature>
<feature type="sequence conflict" description="In Ref. 1; AAA44853." evidence="11" ref="1">
    <original>WM</original>
    <variation>RT</variation>
    <location>
        <begin position="319"/>
        <end position="320"/>
    </location>
</feature>
<feature type="sequence conflict" description="In Ref. 1; AAA44853." evidence="11" ref="1">
    <original>PG</original>
    <variation>R</variation>
    <location>
        <begin position="448"/>
        <end position="449"/>
    </location>
</feature>
<sequence>MGARASVLSGGELDRWEKIRLRPGGKKKYKLKHVVWASRELERFAINPGLLETSEGCRQILGQLQPSLQTGSEERKSLYNTVATLYCVHQKIKIKDTKEALEKIEEEQNKSKKKAQQAAADTGNRGNSSQVSQNYPIVQNIQGQMVHQAISPRTLNAWVKVVEEKAFSPEVIPMFSALSEGATPQDLNTMLNTVGGHQAAMQMLKETINEEAAEWDRLHPAHAGPIAPGQMREPRGSDIAGTTSTLQEQIGWMTNNPPIPVGEIYKRWIILGLNKIVRMYSPSSILDIRQGPKEPFRDYVDRFYKTLRAEQASQEVKNWMTETLLVQNANPDCKTILKALGPAATLEEMMTACQGVGGPGHKARVLAEAMSQVTNSATIMMQRGNFRNQRKIIKCFNCGKEGHIAKNCRAPRKRGCWKCGKEGHQMKDCTERQANFLGKIWPSCKGRPGNFPQSRTEPTAPPEESFRFGEETTTPYQKQEKKQETIDKDLYPLASLKSLFGNDPLSQ</sequence>
<organismHost>
    <name type="scientific">Homo sapiens</name>
    <name type="common">Human</name>
    <dbReference type="NCBI Taxonomy" id="9606"/>
</organismHost>
<evidence type="ECO:0000250" key="1"/>
<evidence type="ECO:0000250" key="2">
    <source>
        <dbReference type="UniProtKB" id="P03347"/>
    </source>
</evidence>
<evidence type="ECO:0000250" key="3">
    <source>
        <dbReference type="UniProtKB" id="P03348"/>
    </source>
</evidence>
<evidence type="ECO:0000250" key="4">
    <source>
        <dbReference type="UniProtKB" id="P03349"/>
    </source>
</evidence>
<evidence type="ECO:0000250" key="5">
    <source>
        <dbReference type="UniProtKB" id="P04591"/>
    </source>
</evidence>
<evidence type="ECO:0000250" key="6">
    <source>
        <dbReference type="UniProtKB" id="P12493"/>
    </source>
</evidence>
<evidence type="ECO:0000250" key="7">
    <source>
        <dbReference type="UniProtKB" id="P12497"/>
    </source>
</evidence>
<evidence type="ECO:0000255" key="8">
    <source>
        <dbReference type="PROSITE-ProRule" id="PRU00047"/>
    </source>
</evidence>
<evidence type="ECO:0000256" key="9">
    <source>
        <dbReference type="SAM" id="MobiDB-lite"/>
    </source>
</evidence>
<evidence type="ECO:0000269" key="10">
    <source>
    </source>
</evidence>
<evidence type="ECO:0000305" key="11"/>
<keyword id="KW-0002">3D-structure</keyword>
<keyword id="KW-0014">AIDS</keyword>
<keyword id="KW-0167">Capsid protein</keyword>
<keyword id="KW-0903">Direct protein sequencing</keyword>
<keyword id="KW-1032">Host cell membrane</keyword>
<keyword id="KW-1035">Host cytoplasm</keyword>
<keyword id="KW-1039">Host endosome</keyword>
<keyword id="KW-1043">Host membrane</keyword>
<keyword id="KW-1048">Host nucleus</keyword>
<keyword id="KW-0945">Host-virus interaction</keyword>
<keyword id="KW-0449">Lipoprotein</keyword>
<keyword id="KW-0472">Membrane</keyword>
<keyword id="KW-0479">Metal-binding</keyword>
<keyword id="KW-0488">Methylation</keyword>
<keyword id="KW-0519">Myristate</keyword>
<keyword id="KW-0597">Phosphoprotein</keyword>
<keyword id="KW-1185">Reference proteome</keyword>
<keyword id="KW-0677">Repeat</keyword>
<keyword id="KW-0688">Ribosomal frameshifting</keyword>
<keyword id="KW-0694">RNA-binding</keyword>
<keyword id="KW-1198">Viral budding</keyword>
<keyword id="KW-1187">Viral budding via the host ESCRT complexes</keyword>
<keyword id="KW-0543">Viral nucleoprotein</keyword>
<keyword id="KW-1188">Viral release from host cell</keyword>
<keyword id="KW-0946">Virion</keyword>
<keyword id="KW-0862">Zinc</keyword>
<keyword id="KW-0863">Zinc-finger</keyword>
<comment type="function">
    <molecule>Gag polyprotein</molecule>
    <text evidence="5">Mediates, with Gag-Pol polyprotein, the essential events in virion assembly, including binding the plasma membrane, making the protein-protein interactions necessary to create spherical particles, recruiting the viral Env proteins, and packaging the genomic RNA via direct interactions with the RNA packaging sequence (Psi).</text>
</comment>
<comment type="function">
    <molecule>Matrix protein p17</molecule>
    <text evidence="1 6">Targets the polyprotein to the plasma membrane via a multipartite membrane-binding signal, that includes its myristoylated N-terminus (By similarity). Matrix protein is part of the pre-integration complex. Implicated in the release from host cell mediated by Vpu. Binds to RNA (By similarity).</text>
</comment>
<comment type="function">
    <molecule>Capsid protein p24</molecule>
    <text evidence="5 6">Forms the conical core that encapsulates the genomic RNA-nucleocapsid complex in the virion. Most core are conical, with only 7% tubular. The core is constituted by capsid protein hexamer subunits. The core is disassembled soon after virion entry (By similarity). The capsid promotes immune invasion by cloaking viral DNA from CGAS detection (By similarity). Host restriction factors such as TRIM5-alpha or TRIMCyp bind retroviral capsids and cause premature capsid disassembly, leading to blocks in reverse transcription. Capsid restriction by TRIM5 is one of the factors which restricts HIV-1 to the human species. Host PIN1 apparently facilitates the virion uncoating (By similarity). On the other hand, interactions with PDZD8 or CYPA stabilize the capsid.</text>
</comment>
<comment type="function">
    <molecule>Nucleocapsid protein p7</molecule>
    <text evidence="5">Encapsulates and protects viral dimeric unspliced genomic RNA (gRNA). Binds these RNAs through its zinc fingers. Acts as a nucleic acid chaperone which is involved in rearangement of nucleic acid secondary structure during gRNA retrotranscription. Also facilitates template switch leading to recombination. As part of the polyprotein, participates in gRNA dimerization, packaging, tRNA incorporation and virion assembly.</text>
</comment>
<comment type="function">
    <molecule>p6-gag</molecule>
    <text evidence="6">Plays a role in budding of the assembled particle by interacting with the host class E VPS proteins TSG101 and PDCD6IP/AIP1.</text>
</comment>
<comment type="subunit">
    <molecule>Gag polyprotein</molecule>
    <text evidence="4 5">Homotrimer; further assembles as hexamers of trimers. Oligomerization possibly creates a central hole into which the cytoplasmic tail of the gp41 envelope protein may be inserted. Interacts with host TRIM22; this interaction seems to disrupt proper trafficking of Gag polyprotein and may interfere with budding. Interacts with host PDZD8. When ubiquitinated, interacts (via p6-gag domain) with host PACSIN2; this interaction allows PACSIN2 recruitment to viral assembly sites and its subsequent incorporation into virions. Interacts with MOV10 (By similarity).</text>
</comment>
<comment type="subunit">
    <molecule>Matrix protein p17</molecule>
    <text evidence="5 6">Homotrimer; further assembles as hexamers of trimers. Interacts with gp41 (via C-terminus). Interacts with host CALM1; this interaction induces a conformational change in the Matrix protein, triggering exposure of the myristate group. Interacts with host AP3D1; this interaction allows the polyprotein trafficking to multivesicular bodies during virus assembly. Part of the pre-integration complex (PIC) which is composed of viral genome, matrix protein, Vpr and integrase.</text>
</comment>
<comment type="subunit">
    <molecule>Capsid protein p24</molecule>
    <text evidence="5 6">Homodimer; the homodimer further multimerizes as homohexamers or homopentamers (By similarity). Interacts with host NUP98 (By similarity). Interacts with host PPIA/CYPA; this interaction stabilizes the capsid (By similarity). Interacts with host NUP153 (By similarity). Interacts with host PDZD8; this interaction stabilizes the capsid. Interacts with host TRIM5; this interaction destabilizes the capsid (By similarity). Interacts with host CPSF6 (By similarity). Interacts with host NONO; the interaction is weak (By similarity).</text>
</comment>
<comment type="subunit">
    <molecule>Nucleocapsid protein p7</molecule>
    <text evidence="6">Interacts with host NUP98.</text>
</comment>
<comment type="subunit">
    <molecule>p6-gag</molecule>
    <text evidence="3 6">Interacts with Vpr; this interaction allows Vpr incorporation into the virion. Interacts with host TSG101. p6-gag interacts with host PDCD6IP/AIP1.</text>
</comment>
<comment type="subcellular location">
    <molecule>Gag polyprotein</molecule>
    <subcellularLocation>
        <location evidence="6">Host cell membrane</location>
        <topology evidence="6">Lipid-anchor</topology>
    </subcellularLocation>
    <subcellularLocation>
        <location evidence="6">Host endosome</location>
        <location evidence="6">Host multivesicular body</location>
    </subcellularLocation>
    <text evidence="6">These locations are probably linked to virus assembly sites. The main location is the cell membrane, but under some circumstances, late endosomal compartments can serve as productive sites for virion assembly.</text>
</comment>
<comment type="subcellular location">
    <molecule>Matrix protein p17</molecule>
    <subcellularLocation>
        <location evidence="6">Virion membrane</location>
        <topology evidence="6">Lipid-anchor</topology>
    </subcellularLocation>
    <subcellularLocation>
        <location evidence="1">Host nucleus</location>
    </subcellularLocation>
    <subcellularLocation>
        <location evidence="1">Host cytoplasm</location>
    </subcellularLocation>
</comment>
<comment type="subcellular location">
    <molecule>Capsid protein p24</molecule>
    <subcellularLocation>
        <location evidence="6">Virion</location>
    </subcellularLocation>
</comment>
<comment type="subcellular location">
    <molecule>Nucleocapsid protein p7</molecule>
    <subcellularLocation>
        <location evidence="6">Virion</location>
    </subcellularLocation>
</comment>
<comment type="alternative products">
    <event type="ribosomal frameshifting"/>
    <isoform>
        <id>P05888-1</id>
        <name>Gag polyprotein</name>
        <sequence type="displayed"/>
    </isoform>
    <isoform>
        <id>P05961-1</id>
        <name>Gag-Pol polyprotein</name>
        <sequence type="external"/>
    </isoform>
    <text>Translation results in the formation of the Gag polyprotein most of the time. Ribosomal frameshifting at the gag-pol genes boundary occurs at low frequency and produces the Gag-Pol polyprotein. This strategy of translation probably allows the virus to modulate the quantity of each viral protein. Maintenance of a correct Gag to Gag-Pol ratio is essential for RNA dimerization and viral infectivity.</text>
</comment>
<comment type="domain">
    <text evidence="6">Late-budding domains (L domains) are short sequence motifs essential for viral particle budding. They recruit proteins of the host ESCRT machinery (Endosomal Sorting Complex Required for Transport) or ESCRT-associated proteins. p6-gag contains two L domains: a PTAP/PSAP motif, which interacts with the UEV domain of TSG101 and a LYPX(n)L motif which interacts with PDCD6IP/AIP1.</text>
</comment>
<comment type="PTM">
    <text evidence="6">Gag-Pol polyprotein: Specific enzymatic cleavages by the viral protease yield mature proteins.</text>
</comment>
<comment type="PTM">
    <molecule>Matrix protein p17</molecule>
    <text evidence="5">Tyrosine phosphorylated presumably in the virion by a host kinase. Phosphorylation is apparently not a major regulator of membrane association.</text>
</comment>
<comment type="PTM">
    <molecule>Capsid protein p24</molecule>
    <text evidence="6">Phosphorylated possibly by host MAPK1; this phosphorylation is necessary for Pin1-mediated virion uncoating.</text>
</comment>
<comment type="PTM">
    <molecule>Nucleocapsid protein p7</molecule>
    <text evidence="2">Methylated by host PRMT6, impairing its function by reducing RNA annealing and the initiation of reverse transcription.</text>
</comment>
<comment type="miscellaneous">
    <text>The MN isolate was taken from a pediatric AIDS patient in 1984.</text>
</comment>
<comment type="miscellaneous">
    <text>HIV-1 lineages are divided in three main groups, M (for Major), O (for Outlier), and N (for New, or Non-M, Non-O). The vast majority of strains found worldwide belong to the group M. Group O seems to be endemic to and largely confined to Cameroon and neighboring countries in West Central Africa, where these viruses represent a small minority of HIV-1 strains. The group N is represented by a limited number of isolates from Cameroonian persons. The group M is further subdivided in 9 clades or subtypes (A to D, F to H, J and K).</text>
</comment>
<comment type="miscellaneous">
    <molecule>Isoform Gag polyprotein</molecule>
    <text>Produced by conventional translation.</text>
</comment>
<comment type="similarity">
    <text evidence="11">Belongs to the primate lentivirus group gag polyprotein family.</text>
</comment>
<name>GAG_HV1MN</name>
<dbReference type="EMBL" id="M17449">
    <property type="protein sequence ID" value="AAA44853.1"/>
    <property type="molecule type" value="Genomic_RNA"/>
</dbReference>
<dbReference type="PIR" id="A38068">
    <property type="entry name" value="A38068"/>
</dbReference>
<dbReference type="PDB" id="1AAF">
    <property type="method" value="NMR"/>
    <property type="chains" value="A=381-435"/>
</dbReference>
<dbReference type="PDBsum" id="1AAF"/>
<dbReference type="SMR" id="P05888"/>
<dbReference type="IntAct" id="P05888">
    <property type="interactions" value="4"/>
</dbReference>
<dbReference type="MINT" id="P05888"/>
<dbReference type="BindingDB" id="P05888"/>
<dbReference type="iPTMnet" id="P05888"/>
<dbReference type="PRO" id="PR:P05888"/>
<dbReference type="Proteomes" id="UP000007697">
    <property type="component" value="Genome"/>
</dbReference>
<dbReference type="GO" id="GO:0042025">
    <property type="term" value="C:host cell nucleus"/>
    <property type="evidence" value="ECO:0007669"/>
    <property type="project" value="UniProtKB-SubCell"/>
</dbReference>
<dbReference type="GO" id="GO:0020002">
    <property type="term" value="C:host cell plasma membrane"/>
    <property type="evidence" value="ECO:0007669"/>
    <property type="project" value="UniProtKB-SubCell"/>
</dbReference>
<dbReference type="GO" id="GO:0072494">
    <property type="term" value="C:host multivesicular body"/>
    <property type="evidence" value="ECO:0007669"/>
    <property type="project" value="UniProtKB-SubCell"/>
</dbReference>
<dbReference type="GO" id="GO:0016020">
    <property type="term" value="C:membrane"/>
    <property type="evidence" value="ECO:0007669"/>
    <property type="project" value="UniProtKB-KW"/>
</dbReference>
<dbReference type="GO" id="GO:0019013">
    <property type="term" value="C:viral nucleocapsid"/>
    <property type="evidence" value="ECO:0007669"/>
    <property type="project" value="UniProtKB-KW"/>
</dbReference>
<dbReference type="GO" id="GO:0055036">
    <property type="term" value="C:virion membrane"/>
    <property type="evidence" value="ECO:0007669"/>
    <property type="project" value="UniProtKB-SubCell"/>
</dbReference>
<dbReference type="GO" id="GO:0043565">
    <property type="term" value="F:sequence-specific DNA binding"/>
    <property type="evidence" value="ECO:0000314"/>
    <property type="project" value="CAFA"/>
</dbReference>
<dbReference type="GO" id="GO:0005198">
    <property type="term" value="F:structural molecule activity"/>
    <property type="evidence" value="ECO:0007669"/>
    <property type="project" value="InterPro"/>
</dbReference>
<dbReference type="GO" id="GO:0000049">
    <property type="term" value="F:tRNA binding"/>
    <property type="evidence" value="ECO:0000314"/>
    <property type="project" value="CAFA"/>
</dbReference>
<dbReference type="GO" id="GO:0008270">
    <property type="term" value="F:zinc ion binding"/>
    <property type="evidence" value="ECO:0000314"/>
    <property type="project" value="CAFA"/>
</dbReference>
<dbReference type="GO" id="GO:0039702">
    <property type="term" value="P:viral budding via host ESCRT complex"/>
    <property type="evidence" value="ECO:0007669"/>
    <property type="project" value="UniProtKB-KW"/>
</dbReference>
<dbReference type="GO" id="GO:0075523">
    <property type="term" value="P:viral translational frameshifting"/>
    <property type="evidence" value="ECO:0007669"/>
    <property type="project" value="UniProtKB-KW"/>
</dbReference>
<dbReference type="FunFam" id="1.10.1200.30:FF:000001">
    <property type="entry name" value="Gag polyprotein"/>
    <property type="match status" value="1"/>
</dbReference>
<dbReference type="FunFam" id="1.10.150.90:FF:000001">
    <property type="entry name" value="Gag polyprotein"/>
    <property type="match status" value="1"/>
</dbReference>
<dbReference type="FunFam" id="1.10.375.10:FF:000001">
    <property type="entry name" value="Gag polyprotein"/>
    <property type="match status" value="1"/>
</dbReference>
<dbReference type="FunFam" id="1.20.5.760:FF:000001">
    <property type="entry name" value="Gag polyprotein"/>
    <property type="match status" value="1"/>
</dbReference>
<dbReference type="FunFam" id="4.10.60.10:FF:000001">
    <property type="entry name" value="Gag polyprotein"/>
    <property type="match status" value="1"/>
</dbReference>
<dbReference type="Gene3D" id="1.10.1200.30">
    <property type="match status" value="1"/>
</dbReference>
<dbReference type="Gene3D" id="6.10.250.390">
    <property type="match status" value="1"/>
</dbReference>
<dbReference type="Gene3D" id="1.10.375.10">
    <property type="entry name" value="Human Immunodeficiency Virus Type 1 Capsid Protein"/>
    <property type="match status" value="1"/>
</dbReference>
<dbReference type="Gene3D" id="1.10.150.90">
    <property type="entry name" value="Immunodeficiency lentiviruses, gag gene matrix protein p17"/>
    <property type="match status" value="1"/>
</dbReference>
<dbReference type="Gene3D" id="1.20.5.760">
    <property type="entry name" value="Single helix bin"/>
    <property type="match status" value="1"/>
</dbReference>
<dbReference type="Gene3D" id="4.10.60.10">
    <property type="entry name" value="Zinc finger, CCHC-type"/>
    <property type="match status" value="1"/>
</dbReference>
<dbReference type="InterPro" id="IPR045345">
    <property type="entry name" value="Gag_p24_C"/>
</dbReference>
<dbReference type="InterPro" id="IPR014817">
    <property type="entry name" value="Gag_p6"/>
</dbReference>
<dbReference type="InterPro" id="IPR000071">
    <property type="entry name" value="Lentvrl_matrix_N"/>
</dbReference>
<dbReference type="InterPro" id="IPR012344">
    <property type="entry name" value="Matrix_HIV/RSV_N"/>
</dbReference>
<dbReference type="InterPro" id="IPR050195">
    <property type="entry name" value="Primate_lentivir_Gag_pol-like"/>
</dbReference>
<dbReference type="InterPro" id="IPR008916">
    <property type="entry name" value="Retrov_capsid_C"/>
</dbReference>
<dbReference type="InterPro" id="IPR008919">
    <property type="entry name" value="Retrov_capsid_N"/>
</dbReference>
<dbReference type="InterPro" id="IPR010999">
    <property type="entry name" value="Retrovr_matrix"/>
</dbReference>
<dbReference type="InterPro" id="IPR001878">
    <property type="entry name" value="Znf_CCHC"/>
</dbReference>
<dbReference type="InterPro" id="IPR036875">
    <property type="entry name" value="Znf_CCHC_sf"/>
</dbReference>
<dbReference type="PANTHER" id="PTHR40389:SF4">
    <property type="match status" value="1"/>
</dbReference>
<dbReference type="PANTHER" id="PTHR40389">
    <property type="entry name" value="ENDOGENOUS RETROVIRUS GROUP K MEMBER 24 GAG POLYPROTEIN-RELATED"/>
    <property type="match status" value="1"/>
</dbReference>
<dbReference type="Pfam" id="PF00540">
    <property type="entry name" value="Gag_p17"/>
    <property type="match status" value="1"/>
</dbReference>
<dbReference type="Pfam" id="PF00607">
    <property type="entry name" value="Gag_p24"/>
    <property type="match status" value="1"/>
</dbReference>
<dbReference type="Pfam" id="PF19317">
    <property type="entry name" value="Gag_p24_C"/>
    <property type="match status" value="1"/>
</dbReference>
<dbReference type="Pfam" id="PF08705">
    <property type="entry name" value="Gag_p6"/>
    <property type="match status" value="1"/>
</dbReference>
<dbReference type="Pfam" id="PF00098">
    <property type="entry name" value="zf-CCHC"/>
    <property type="match status" value="2"/>
</dbReference>
<dbReference type="PRINTS" id="PR00234">
    <property type="entry name" value="HIV1MATRIX"/>
</dbReference>
<dbReference type="SMART" id="SM00343">
    <property type="entry name" value="ZnF_C2HC"/>
    <property type="match status" value="2"/>
</dbReference>
<dbReference type="SUPFAM" id="SSF47836">
    <property type="entry name" value="Retroviral matrix proteins"/>
    <property type="match status" value="1"/>
</dbReference>
<dbReference type="SUPFAM" id="SSF47353">
    <property type="entry name" value="Retrovirus capsid dimerization domain-like"/>
    <property type="match status" value="1"/>
</dbReference>
<dbReference type="SUPFAM" id="SSF47943">
    <property type="entry name" value="Retrovirus capsid protein, N-terminal core domain"/>
    <property type="match status" value="1"/>
</dbReference>
<dbReference type="SUPFAM" id="SSF57756">
    <property type="entry name" value="Retrovirus zinc finger-like domains"/>
    <property type="match status" value="1"/>
</dbReference>
<dbReference type="PROSITE" id="PS50158">
    <property type="entry name" value="ZF_CCHC"/>
    <property type="match status" value="2"/>
</dbReference>
<gene>
    <name type="primary">gag</name>
</gene>
<protein>
    <recommendedName>
        <fullName>Gag polyprotein</fullName>
    </recommendedName>
    <alternativeName>
        <fullName>Pr55Gag</fullName>
    </alternativeName>
    <component>
        <recommendedName>
            <fullName>Matrix protein p17</fullName>
            <shortName>MA</shortName>
        </recommendedName>
    </component>
    <component>
        <recommendedName>
            <fullName>Capsid protein p24</fullName>
            <shortName>CA</shortName>
        </recommendedName>
    </component>
    <component>
        <recommendedName>
            <fullName evidence="6">Spacer peptide 1</fullName>
            <shortName>SP1</shortName>
        </recommendedName>
        <alternativeName>
            <fullName>p2</fullName>
        </alternativeName>
    </component>
    <component>
        <recommendedName>
            <fullName>Nucleocapsid protein p7</fullName>
            <shortName>NC</shortName>
        </recommendedName>
    </component>
    <component>
        <recommendedName>
            <fullName evidence="6">Spacer peptide 2</fullName>
            <shortName>SP2</shortName>
        </recommendedName>
        <alternativeName>
            <fullName>p1</fullName>
        </alternativeName>
    </component>
    <component>
        <recommendedName>
            <fullName>p6-gag</fullName>
        </recommendedName>
    </component>
</protein>
<reference key="1">
    <citation type="journal article" date="1988" name="Virology">
        <title>Envelope sequences of two new United States HIV-1 isolates.</title>
        <authorList>
            <person name="Gurgo C."/>
            <person name="Guo H.-G."/>
            <person name="Franchini G."/>
            <person name="Aldovini A."/>
            <person name="Collalti E."/>
            <person name="Farrell K."/>
            <person name="Wong-Staal F."/>
            <person name="Gallo R.C."/>
            <person name="Reitz M.S. Jr."/>
        </authorList>
    </citation>
    <scope>NUCLEOTIDE SEQUENCE [GENOMIC RNA]</scope>
</reference>
<reference key="2">
    <citation type="journal article" date="1992" name="J. Virol.">
        <title>Gag proteins of the highly replicative MN strain of human immunodeficiency virus type 1: posttranslational modifications, proteolytic processings, and complete amino acid sequences.</title>
        <authorList>
            <person name="Henderson L.E."/>
            <person name="Bowers M.A."/>
            <person name="Sowder R.C. II"/>
            <person name="Serabyn S.A."/>
            <person name="Johnson D.G."/>
            <person name="Bess J.W. Jr."/>
            <person name="Arthur L.O."/>
            <person name="Bryant D.K."/>
            <person name="Fenselau C."/>
        </authorList>
    </citation>
    <scope>PROTEIN SEQUENCE OF 2-507</scope>
    <scope>MYRISTOYLATION AT GLY-2</scope>
    <scope>PROTEOLYTIC PROCESSING OF POLYPROTEIN</scope>
</reference>
<reference key="3">
    <citation type="journal article" date="2003" name="Biochim. Biophys. Acta">
        <title>Role of HIV-1 Gag domains in viral assembly.</title>
        <authorList>
            <person name="Scarlata S."/>
            <person name="Carter C."/>
        </authorList>
    </citation>
    <scope>REVIEW</scope>
</reference>
<reference key="4">
    <citation type="journal article" date="1992" name="Protein Sci.">
        <title>Nucleocapsid zinc fingers detected in retroviruses: EXAFS studies of intact viruses and the solution-state structure of the nucleocapsid protein from HIV-1.</title>
        <authorList>
            <person name="Summers M.F."/>
            <person name="Henderson L.E."/>
            <person name="Chance M.R."/>
            <person name="Bess J.W. Jr."/>
            <person name="South T.L."/>
            <person name="Blake P.R."/>
            <person name="Sagi I."/>
            <person name="Perez-Alvarado G."/>
            <person name="Sowder R.C. III"/>
            <person name="Hare D.R."/>
            <person name="Arthur L.O."/>
        </authorList>
    </citation>
    <scope>STRUCTURE BY NMR OF 381-435</scope>
</reference>
<accession>P05888</accession>